<name>PTCD3_MOUSE</name>
<keyword id="KW-0002">3D-structure</keyword>
<keyword id="KW-0007">Acetylation</keyword>
<keyword id="KW-0496">Mitochondrion</keyword>
<keyword id="KW-1185">Reference proteome</keyword>
<keyword id="KW-0677">Repeat</keyword>
<keyword id="KW-0687">Ribonucleoprotein</keyword>
<keyword id="KW-0689">Ribosomal protein</keyword>
<keyword id="KW-0694">RNA-binding</keyword>
<keyword id="KW-0699">rRNA-binding</keyword>
<keyword id="KW-0809">Transit peptide</keyword>
<keyword id="KW-0810">Translation regulation</keyword>
<sequence>MAAAAVAARRLSFRSGLVLLQTTRGTGVCEPKVCCRFYAGTESLPKVEGSDITGIEEIVIPKKKTWDKVAVLQALASTVNRDPTAAPYVFHDDPYLIPTSALESRSFLLAKKSGETAAKFIINSYPKYFQKDIAEPHIPCLMPEYFEPQIEDVSEAALEERIRLRKVRASVDMFDQLLQAGTTVSLETTNSLLDLLCYYGDQEPPADYPFQQTEHLENLEEAAEENNQTSKMESGPWKAQNNAERIFALMPEKNARSYCTMIRGMVKHRAYAQALNVYTELLNNRLSADVYTFNALIEAKTFILNEKFEEKWNDILDLLKHMVAQKVKPNLQTFNTILKGLRKCYSLGRIPALQILREMKHIGIEPSLATYHHIIHLFYPRDLSAIKMPSLIIYDIMNELEGRTFSPQDLDDGRFFQLAMSVCSSLRDLELAYQVHRLLNTGDNRKLVGHDPLRKVYYSKFFSLICSLEQIDVTLKWYKDLIPSVFLPHYQIFIGLLQALDVANRLELVPQIWKDSKEYSHTFRDALREEVLMLMARDKHPPELQVAFADCAADIKSTYEDQSARQPAFDWPANPLQYIAVLFLRGGRSQEAWKMLELFKKHKKIPRNELLEEFMDTAKASGSTALAIEVVKLASAFSLPIGESLAQRVVMDFTVDPEQKEALGNLTELNSSDGESSSDSDSDDK</sequence>
<accession>Q14C51</accession>
<accession>Q3UKH5</accession>
<accession>Q5XG65</accession>
<accession>Q6P9N5</accession>
<accession>Q9CZ12</accession>
<reference key="1">
    <citation type="journal article" date="2005" name="Science">
        <title>The transcriptional landscape of the mammalian genome.</title>
        <authorList>
            <person name="Carninci P."/>
            <person name="Kasukawa T."/>
            <person name="Katayama S."/>
            <person name="Gough J."/>
            <person name="Frith M.C."/>
            <person name="Maeda N."/>
            <person name="Oyama R."/>
            <person name="Ravasi T."/>
            <person name="Lenhard B."/>
            <person name="Wells C."/>
            <person name="Kodzius R."/>
            <person name="Shimokawa K."/>
            <person name="Bajic V.B."/>
            <person name="Brenner S.E."/>
            <person name="Batalov S."/>
            <person name="Forrest A.R."/>
            <person name="Zavolan M."/>
            <person name="Davis M.J."/>
            <person name="Wilming L.G."/>
            <person name="Aidinis V."/>
            <person name="Allen J.E."/>
            <person name="Ambesi-Impiombato A."/>
            <person name="Apweiler R."/>
            <person name="Aturaliya R.N."/>
            <person name="Bailey T.L."/>
            <person name="Bansal M."/>
            <person name="Baxter L."/>
            <person name="Beisel K.W."/>
            <person name="Bersano T."/>
            <person name="Bono H."/>
            <person name="Chalk A.M."/>
            <person name="Chiu K.P."/>
            <person name="Choudhary V."/>
            <person name="Christoffels A."/>
            <person name="Clutterbuck D.R."/>
            <person name="Crowe M.L."/>
            <person name="Dalla E."/>
            <person name="Dalrymple B.P."/>
            <person name="de Bono B."/>
            <person name="Della Gatta G."/>
            <person name="di Bernardo D."/>
            <person name="Down T."/>
            <person name="Engstrom P."/>
            <person name="Fagiolini M."/>
            <person name="Faulkner G."/>
            <person name="Fletcher C.F."/>
            <person name="Fukushima T."/>
            <person name="Furuno M."/>
            <person name="Futaki S."/>
            <person name="Gariboldi M."/>
            <person name="Georgii-Hemming P."/>
            <person name="Gingeras T.R."/>
            <person name="Gojobori T."/>
            <person name="Green R.E."/>
            <person name="Gustincich S."/>
            <person name="Harbers M."/>
            <person name="Hayashi Y."/>
            <person name="Hensch T.K."/>
            <person name="Hirokawa N."/>
            <person name="Hill D."/>
            <person name="Huminiecki L."/>
            <person name="Iacono M."/>
            <person name="Ikeo K."/>
            <person name="Iwama A."/>
            <person name="Ishikawa T."/>
            <person name="Jakt M."/>
            <person name="Kanapin A."/>
            <person name="Katoh M."/>
            <person name="Kawasawa Y."/>
            <person name="Kelso J."/>
            <person name="Kitamura H."/>
            <person name="Kitano H."/>
            <person name="Kollias G."/>
            <person name="Krishnan S.P."/>
            <person name="Kruger A."/>
            <person name="Kummerfeld S.K."/>
            <person name="Kurochkin I.V."/>
            <person name="Lareau L.F."/>
            <person name="Lazarevic D."/>
            <person name="Lipovich L."/>
            <person name="Liu J."/>
            <person name="Liuni S."/>
            <person name="McWilliam S."/>
            <person name="Madan Babu M."/>
            <person name="Madera M."/>
            <person name="Marchionni L."/>
            <person name="Matsuda H."/>
            <person name="Matsuzawa S."/>
            <person name="Miki H."/>
            <person name="Mignone F."/>
            <person name="Miyake S."/>
            <person name="Morris K."/>
            <person name="Mottagui-Tabar S."/>
            <person name="Mulder N."/>
            <person name="Nakano N."/>
            <person name="Nakauchi H."/>
            <person name="Ng P."/>
            <person name="Nilsson R."/>
            <person name="Nishiguchi S."/>
            <person name="Nishikawa S."/>
            <person name="Nori F."/>
            <person name="Ohara O."/>
            <person name="Okazaki Y."/>
            <person name="Orlando V."/>
            <person name="Pang K.C."/>
            <person name="Pavan W.J."/>
            <person name="Pavesi G."/>
            <person name="Pesole G."/>
            <person name="Petrovsky N."/>
            <person name="Piazza S."/>
            <person name="Reed J."/>
            <person name="Reid J.F."/>
            <person name="Ring B.Z."/>
            <person name="Ringwald M."/>
            <person name="Rost B."/>
            <person name="Ruan Y."/>
            <person name="Salzberg S.L."/>
            <person name="Sandelin A."/>
            <person name="Schneider C."/>
            <person name="Schoenbach C."/>
            <person name="Sekiguchi K."/>
            <person name="Semple C.A."/>
            <person name="Seno S."/>
            <person name="Sessa L."/>
            <person name="Sheng Y."/>
            <person name="Shibata Y."/>
            <person name="Shimada H."/>
            <person name="Shimada K."/>
            <person name="Silva D."/>
            <person name="Sinclair B."/>
            <person name="Sperling S."/>
            <person name="Stupka E."/>
            <person name="Sugiura K."/>
            <person name="Sultana R."/>
            <person name="Takenaka Y."/>
            <person name="Taki K."/>
            <person name="Tammoja K."/>
            <person name="Tan S.L."/>
            <person name="Tang S."/>
            <person name="Taylor M.S."/>
            <person name="Tegner J."/>
            <person name="Teichmann S.A."/>
            <person name="Ueda H.R."/>
            <person name="van Nimwegen E."/>
            <person name="Verardo R."/>
            <person name="Wei C.L."/>
            <person name="Yagi K."/>
            <person name="Yamanishi H."/>
            <person name="Zabarovsky E."/>
            <person name="Zhu S."/>
            <person name="Zimmer A."/>
            <person name="Hide W."/>
            <person name="Bult C."/>
            <person name="Grimmond S.M."/>
            <person name="Teasdale R.D."/>
            <person name="Liu E.T."/>
            <person name="Brusic V."/>
            <person name="Quackenbush J."/>
            <person name="Wahlestedt C."/>
            <person name="Mattick J.S."/>
            <person name="Hume D.A."/>
            <person name="Kai C."/>
            <person name="Sasaki D."/>
            <person name="Tomaru Y."/>
            <person name="Fukuda S."/>
            <person name="Kanamori-Katayama M."/>
            <person name="Suzuki M."/>
            <person name="Aoki J."/>
            <person name="Arakawa T."/>
            <person name="Iida J."/>
            <person name="Imamura K."/>
            <person name="Itoh M."/>
            <person name="Kato T."/>
            <person name="Kawaji H."/>
            <person name="Kawagashira N."/>
            <person name="Kawashima T."/>
            <person name="Kojima M."/>
            <person name="Kondo S."/>
            <person name="Konno H."/>
            <person name="Nakano K."/>
            <person name="Ninomiya N."/>
            <person name="Nishio T."/>
            <person name="Okada M."/>
            <person name="Plessy C."/>
            <person name="Shibata K."/>
            <person name="Shiraki T."/>
            <person name="Suzuki S."/>
            <person name="Tagami M."/>
            <person name="Waki K."/>
            <person name="Watahiki A."/>
            <person name="Okamura-Oho Y."/>
            <person name="Suzuki H."/>
            <person name="Kawai J."/>
            <person name="Hayashizaki Y."/>
        </authorList>
    </citation>
    <scope>NUCLEOTIDE SEQUENCE [LARGE SCALE MRNA]</scope>
    <source>
        <strain>C57BL/6J</strain>
        <tissue>Placenta</tissue>
    </source>
</reference>
<reference key="2">
    <citation type="journal article" date="2004" name="Genome Res.">
        <title>The status, quality, and expansion of the NIH full-length cDNA project: the Mammalian Gene Collection (MGC).</title>
        <authorList>
            <consortium name="The MGC Project Team"/>
        </authorList>
    </citation>
    <scope>NUCLEOTIDE SEQUENCE [LARGE SCALE MRNA]</scope>
    <source>
        <strain>C57BL/6J</strain>
        <tissue>Bone</tissue>
        <tissue>Brain</tissue>
    </source>
</reference>
<reference key="3">
    <citation type="journal article" date="2010" name="Cell">
        <title>A tissue-specific atlas of mouse protein phosphorylation and expression.</title>
        <authorList>
            <person name="Huttlin E.L."/>
            <person name="Jedrychowski M.P."/>
            <person name="Elias J.E."/>
            <person name="Goswami T."/>
            <person name="Rad R."/>
            <person name="Beausoleil S.A."/>
            <person name="Villen J."/>
            <person name="Haas W."/>
            <person name="Sowa M.E."/>
            <person name="Gygi S.P."/>
        </authorList>
    </citation>
    <scope>IDENTIFICATION BY MASS SPECTROMETRY [LARGE SCALE ANALYSIS]</scope>
    <source>
        <tissue>Brain</tissue>
        <tissue>Brown adipose tissue</tissue>
        <tissue>Heart</tissue>
        <tissue>Kidney</tissue>
        <tissue>Liver</tissue>
        <tissue>Lung</tissue>
        <tissue>Pancreas</tissue>
        <tissue>Spleen</tissue>
        <tissue>Testis</tissue>
    </source>
</reference>
<proteinExistence type="evidence at protein level"/>
<protein>
    <recommendedName>
        <fullName evidence="5">Small ribosomal subunit protein mS39</fullName>
    </recommendedName>
    <alternativeName>
        <fullName>28S ribosomal protein S39, mitochondrial</fullName>
        <shortName>MRP-S39</shortName>
    </alternativeName>
    <alternativeName>
        <fullName>Pentatricopeptide repeat domain-containing protein 3, mitochondrial</fullName>
    </alternativeName>
</protein>
<organism>
    <name type="scientific">Mus musculus</name>
    <name type="common">Mouse</name>
    <dbReference type="NCBI Taxonomy" id="10090"/>
    <lineage>
        <taxon>Eukaryota</taxon>
        <taxon>Metazoa</taxon>
        <taxon>Chordata</taxon>
        <taxon>Craniata</taxon>
        <taxon>Vertebrata</taxon>
        <taxon>Euteleostomi</taxon>
        <taxon>Mammalia</taxon>
        <taxon>Eutheria</taxon>
        <taxon>Euarchontoglires</taxon>
        <taxon>Glires</taxon>
        <taxon>Rodentia</taxon>
        <taxon>Myomorpha</taxon>
        <taxon>Muroidea</taxon>
        <taxon>Muridae</taxon>
        <taxon>Murinae</taxon>
        <taxon>Mus</taxon>
        <taxon>Mus</taxon>
    </lineage>
</organism>
<dbReference type="EMBL" id="AK013131">
    <property type="protein sequence ID" value="BAB28668.1"/>
    <property type="status" value="ALT_INIT"/>
    <property type="molecule type" value="mRNA"/>
</dbReference>
<dbReference type="EMBL" id="AK146005">
    <property type="protein sequence ID" value="BAE26826.1"/>
    <property type="molecule type" value="mRNA"/>
</dbReference>
<dbReference type="EMBL" id="BC060687">
    <property type="protein sequence ID" value="AAH60687.1"/>
    <property type="molecule type" value="mRNA"/>
</dbReference>
<dbReference type="EMBL" id="BC084595">
    <property type="protein sequence ID" value="AAH84595.1"/>
    <property type="molecule type" value="mRNA"/>
</dbReference>
<dbReference type="EMBL" id="BC115434">
    <property type="protein sequence ID" value="AAI15435.1"/>
    <property type="molecule type" value="mRNA"/>
</dbReference>
<dbReference type="CCDS" id="CCDS20235.1"/>
<dbReference type="RefSeq" id="NP_081551.2">
    <property type="nucleotide sequence ID" value="NM_027275.3"/>
</dbReference>
<dbReference type="PDB" id="7PNT">
    <property type="method" value="EM"/>
    <property type="resolution" value="3.19 A"/>
    <property type="chains" value="4=1-685"/>
</dbReference>
<dbReference type="PDB" id="7PNU">
    <property type="method" value="EM"/>
    <property type="resolution" value="3.06 A"/>
    <property type="chains" value="4=1-685"/>
</dbReference>
<dbReference type="PDB" id="7PNV">
    <property type="method" value="EM"/>
    <property type="resolution" value="3.06 A"/>
    <property type="chains" value="4=1-685"/>
</dbReference>
<dbReference type="PDB" id="7PNW">
    <property type="method" value="EM"/>
    <property type="resolution" value="3.09 A"/>
    <property type="chains" value="4=1-685"/>
</dbReference>
<dbReference type="PDBsum" id="7PNT"/>
<dbReference type="PDBsum" id="7PNU"/>
<dbReference type="PDBsum" id="7PNV"/>
<dbReference type="PDBsum" id="7PNW"/>
<dbReference type="EMDB" id="EMD-13551"/>
<dbReference type="EMDB" id="EMD-13552"/>
<dbReference type="EMDB" id="EMD-13553"/>
<dbReference type="EMDB" id="EMD-13554"/>
<dbReference type="SMR" id="Q14C51"/>
<dbReference type="BioGRID" id="213775">
    <property type="interactions" value="14"/>
</dbReference>
<dbReference type="ComplexPortal" id="CPX-5301">
    <property type="entry name" value="28S mitochondrial small ribosomal subunit"/>
</dbReference>
<dbReference type="FunCoup" id="Q14C51">
    <property type="interactions" value="3907"/>
</dbReference>
<dbReference type="IntAct" id="Q14C51">
    <property type="interactions" value="1"/>
</dbReference>
<dbReference type="STRING" id="10090.ENSMUSP00000080743"/>
<dbReference type="GlyGen" id="Q14C51">
    <property type="glycosylation" value="1 site, 1 O-linked glycan (1 site)"/>
</dbReference>
<dbReference type="iPTMnet" id="Q14C51"/>
<dbReference type="PhosphoSitePlus" id="Q14C51"/>
<dbReference type="SwissPalm" id="Q14C51"/>
<dbReference type="jPOST" id="Q14C51"/>
<dbReference type="PaxDb" id="10090-ENSMUSP00000080743"/>
<dbReference type="PeptideAtlas" id="Q14C51"/>
<dbReference type="ProteomicsDB" id="291615"/>
<dbReference type="Pumba" id="Q14C51"/>
<dbReference type="Antibodypedia" id="32009">
    <property type="antibodies" value="67 antibodies from 21 providers"/>
</dbReference>
<dbReference type="DNASU" id="69956"/>
<dbReference type="Ensembl" id="ENSMUST00000082094.5">
    <property type="protein sequence ID" value="ENSMUSP00000080743.3"/>
    <property type="gene ID" value="ENSMUSG00000063884.7"/>
</dbReference>
<dbReference type="GeneID" id="69956"/>
<dbReference type="KEGG" id="mmu:69956"/>
<dbReference type="UCSC" id="uc009chq.1">
    <property type="organism name" value="mouse"/>
</dbReference>
<dbReference type="AGR" id="MGI:1917206"/>
<dbReference type="CTD" id="55037"/>
<dbReference type="MGI" id="MGI:1917206">
    <property type="gene designation" value="Ptcd3"/>
</dbReference>
<dbReference type="VEuPathDB" id="HostDB:ENSMUSG00000063884"/>
<dbReference type="eggNOG" id="KOG4422">
    <property type="taxonomic scope" value="Eukaryota"/>
</dbReference>
<dbReference type="GeneTree" id="ENSGT00390000016876"/>
<dbReference type="HOGENOM" id="CLU_026264_0_1_1"/>
<dbReference type="InParanoid" id="Q14C51"/>
<dbReference type="OMA" id="FMHQEAQ"/>
<dbReference type="OrthoDB" id="185373at2759"/>
<dbReference type="PhylomeDB" id="Q14C51"/>
<dbReference type="TreeFam" id="TF320158"/>
<dbReference type="Reactome" id="R-MMU-5389840">
    <property type="pathway name" value="Mitochondrial translation elongation"/>
</dbReference>
<dbReference type="Reactome" id="R-MMU-5419276">
    <property type="pathway name" value="Mitochondrial translation termination"/>
</dbReference>
<dbReference type="BioGRID-ORCS" id="69956">
    <property type="hits" value="19 hits in 78 CRISPR screens"/>
</dbReference>
<dbReference type="ChiTaRS" id="Ptcd3">
    <property type="organism name" value="mouse"/>
</dbReference>
<dbReference type="PRO" id="PR:Q14C51"/>
<dbReference type="Proteomes" id="UP000000589">
    <property type="component" value="Chromosome 6"/>
</dbReference>
<dbReference type="RNAct" id="Q14C51">
    <property type="molecule type" value="protein"/>
</dbReference>
<dbReference type="Bgee" id="ENSMUSG00000063884">
    <property type="expression patterns" value="Expressed in spermatocyte and 143 other cell types or tissues"/>
</dbReference>
<dbReference type="ExpressionAtlas" id="Q14C51">
    <property type="expression patterns" value="baseline and differential"/>
</dbReference>
<dbReference type="GO" id="GO:0005829">
    <property type="term" value="C:cytosol"/>
    <property type="evidence" value="ECO:0007669"/>
    <property type="project" value="Ensembl"/>
</dbReference>
<dbReference type="GO" id="GO:0005743">
    <property type="term" value="C:mitochondrial inner membrane"/>
    <property type="evidence" value="ECO:0000303"/>
    <property type="project" value="ComplexPortal"/>
</dbReference>
<dbReference type="GO" id="GO:0005763">
    <property type="term" value="C:mitochondrial small ribosomal subunit"/>
    <property type="evidence" value="ECO:0000303"/>
    <property type="project" value="ComplexPortal"/>
</dbReference>
<dbReference type="GO" id="GO:0005739">
    <property type="term" value="C:mitochondrion"/>
    <property type="evidence" value="ECO:0007005"/>
    <property type="project" value="MGI"/>
</dbReference>
<dbReference type="GO" id="GO:0005654">
    <property type="term" value="C:nucleoplasm"/>
    <property type="evidence" value="ECO:0007669"/>
    <property type="project" value="Ensembl"/>
</dbReference>
<dbReference type="GO" id="GO:0005886">
    <property type="term" value="C:plasma membrane"/>
    <property type="evidence" value="ECO:0007669"/>
    <property type="project" value="Ensembl"/>
</dbReference>
<dbReference type="GO" id="GO:0043024">
    <property type="term" value="F:ribosomal small subunit binding"/>
    <property type="evidence" value="ECO:0000250"/>
    <property type="project" value="UniProtKB"/>
</dbReference>
<dbReference type="GO" id="GO:0019843">
    <property type="term" value="F:rRNA binding"/>
    <property type="evidence" value="ECO:0000250"/>
    <property type="project" value="UniProtKB"/>
</dbReference>
<dbReference type="GO" id="GO:0032543">
    <property type="term" value="P:mitochondrial translation"/>
    <property type="evidence" value="ECO:0000250"/>
    <property type="project" value="UniProtKB"/>
</dbReference>
<dbReference type="GO" id="GO:0006417">
    <property type="term" value="P:regulation of translation"/>
    <property type="evidence" value="ECO:0007669"/>
    <property type="project" value="UniProtKB-KW"/>
</dbReference>
<dbReference type="FunFam" id="1.25.40.10:FF:002139">
    <property type="entry name" value="Pentatricopeptide repeat domain 3"/>
    <property type="match status" value="1"/>
</dbReference>
<dbReference type="FunFam" id="1.25.40.10:FF:000457">
    <property type="entry name" value="Pentatricopeptide repeat domain-containing protein 3, mitochondrial"/>
    <property type="match status" value="1"/>
</dbReference>
<dbReference type="Gene3D" id="1.25.40.10">
    <property type="entry name" value="Tetratricopeptide repeat domain"/>
    <property type="match status" value="2"/>
</dbReference>
<dbReference type="InterPro" id="IPR002885">
    <property type="entry name" value="Pentatricopeptide_rpt"/>
</dbReference>
<dbReference type="InterPro" id="IPR037387">
    <property type="entry name" value="PTCD3"/>
</dbReference>
<dbReference type="InterPro" id="IPR055063">
    <property type="entry name" value="Rib_mS39_PPR"/>
</dbReference>
<dbReference type="InterPro" id="IPR011990">
    <property type="entry name" value="TPR-like_helical_dom_sf"/>
</dbReference>
<dbReference type="PANTHER" id="PTHR16276">
    <property type="entry name" value="PENTATRICOPEPTIDE REPEAT DOMAIN-CONTAINING PROTEIN 3"/>
    <property type="match status" value="1"/>
</dbReference>
<dbReference type="PANTHER" id="PTHR16276:SF1">
    <property type="entry name" value="SMALL RIBOSOMAL SUBUNIT PROTEIN MS39"/>
    <property type="match status" value="1"/>
</dbReference>
<dbReference type="Pfam" id="PF13812">
    <property type="entry name" value="PPR_3"/>
    <property type="match status" value="1"/>
</dbReference>
<dbReference type="Pfam" id="PF22330">
    <property type="entry name" value="Rib_mS39_PPR"/>
    <property type="match status" value="1"/>
</dbReference>
<dbReference type="PROSITE" id="PS51375">
    <property type="entry name" value="PPR"/>
    <property type="match status" value="3"/>
</dbReference>
<evidence type="ECO:0000250" key="1"/>
<evidence type="ECO:0000250" key="2">
    <source>
        <dbReference type="UniProtKB" id="Q96EY7"/>
    </source>
</evidence>
<evidence type="ECO:0000255" key="3"/>
<evidence type="ECO:0000256" key="4">
    <source>
        <dbReference type="SAM" id="MobiDB-lite"/>
    </source>
</evidence>
<evidence type="ECO:0000305" key="5"/>
<gene>
    <name type="primary">Ptcd3</name>
    <name type="synonym">Mrps39</name>
</gene>
<feature type="transit peptide" description="Mitochondrion" evidence="3">
    <location>
        <begin position="1"/>
        <end position="10"/>
    </location>
</feature>
<feature type="chain" id="PRO_0000305029" description="Small ribosomal subunit protein mS39">
    <location>
        <begin position="11"/>
        <end position="685"/>
    </location>
</feature>
<feature type="repeat" description="PPR 1">
    <location>
        <begin position="150"/>
        <end position="184"/>
    </location>
</feature>
<feature type="repeat" description="PPR 2">
    <location>
        <begin position="185"/>
        <end position="220"/>
    </location>
</feature>
<feature type="repeat" description="PPR 3">
    <location>
        <begin position="254"/>
        <end position="288"/>
    </location>
</feature>
<feature type="repeat" description="PPR 4">
    <location>
        <begin position="289"/>
        <end position="329"/>
    </location>
</feature>
<feature type="repeat" description="PPR 5">
    <location>
        <begin position="330"/>
        <end position="366"/>
    </location>
</feature>
<feature type="repeat" description="PPR 6">
    <location>
        <begin position="367"/>
        <end position="407"/>
    </location>
</feature>
<feature type="repeat" description="PPR 7">
    <location>
        <begin position="412"/>
        <end position="446"/>
    </location>
</feature>
<feature type="repeat" description="PPR 8">
    <location>
        <begin position="454"/>
        <end position="488"/>
    </location>
</feature>
<feature type="repeat" description="PPR 9">
    <location>
        <begin position="489"/>
        <end position="523"/>
    </location>
</feature>
<feature type="repeat" description="PPR 10">
    <location>
        <begin position="572"/>
        <end position="606"/>
    </location>
</feature>
<feature type="region of interest" description="Disordered" evidence="4">
    <location>
        <begin position="663"/>
        <end position="685"/>
    </location>
</feature>
<feature type="compositionally biased region" description="Acidic residues" evidence="4">
    <location>
        <begin position="676"/>
        <end position="685"/>
    </location>
</feature>
<feature type="modified residue" description="N6-acetyllysine" evidence="2">
    <location>
        <position position="127"/>
    </location>
</feature>
<feature type="sequence conflict" description="In Ref. 2; AAI15435." evidence="5" ref="2">
    <original>T</original>
    <variation>A</variation>
    <location>
        <position position="279"/>
    </location>
</feature>
<feature type="sequence conflict" description="In Ref. 2; AAI15435." evidence="5" ref="2">
    <original>S</original>
    <variation>G</variation>
    <location>
        <position position="563"/>
    </location>
</feature>
<feature type="sequence conflict" description="In Ref. 2; AAI15435." evidence="5" ref="2">
    <original>S</original>
    <variation>T</variation>
    <location>
        <position position="589"/>
    </location>
</feature>
<feature type="sequence conflict" description="In Ref. 2; AAI15435." evidence="5" ref="2">
    <original>K</original>
    <variation>N</variation>
    <location>
        <position position="603"/>
    </location>
</feature>
<feature type="sequence conflict" description="In Ref. 1; BAE26826." evidence="5" ref="1">
    <original>I</original>
    <variation>T</variation>
    <location>
        <position position="605"/>
    </location>
</feature>
<comment type="function">
    <text evidence="1">Mitochondrial RNA-binding protein that has a role in mitochondrial translation.</text>
</comment>
<comment type="subunit">
    <text evidence="1">Component of the mitochondrial ribosome small subunit (28S) which comprises a 12S rRNA and about 30 distinct proteins. Associated with the 12S mitochondrial rRNA (12S mt-rRNA) (By similarity).</text>
</comment>
<comment type="subcellular location">
    <subcellularLocation>
        <location evidence="1">Mitochondrion</location>
    </subcellularLocation>
</comment>
<comment type="similarity">
    <text evidence="5">Belongs to the mitochondrion-specific ribosomal protein mS39 family.</text>
</comment>
<comment type="sequence caution" evidence="5">
    <conflict type="erroneous initiation">
        <sequence resource="EMBL-CDS" id="BAB28668"/>
    </conflict>
    <text>Truncated N-terminus.</text>
</comment>